<evidence type="ECO:0000250" key="1">
    <source>
        <dbReference type="UniProtKB" id="Q6P4A7"/>
    </source>
</evidence>
<evidence type="ECO:0000250" key="2">
    <source>
        <dbReference type="UniProtKB" id="Q9H9B4"/>
    </source>
</evidence>
<evidence type="ECO:0000255" key="3"/>
<evidence type="ECO:0000269" key="4">
    <source>
    </source>
</evidence>
<evidence type="ECO:0000303" key="5">
    <source>
    </source>
</evidence>
<evidence type="ECO:0000305" key="6"/>
<feature type="chain" id="PRO_0000425598" description="Sideroflexin-4">
    <location>
        <begin position="1"/>
        <end position="316"/>
    </location>
</feature>
<feature type="transmembrane region" description="Helical" evidence="3">
    <location>
        <begin position="83"/>
        <end position="103"/>
    </location>
</feature>
<feature type="transmembrane region" description="Helical" evidence="3">
    <location>
        <begin position="141"/>
        <end position="161"/>
    </location>
</feature>
<feature type="transmembrane region" description="Helical" evidence="3">
    <location>
        <begin position="174"/>
        <end position="194"/>
    </location>
</feature>
<feature type="transmembrane region" description="Helical" evidence="3">
    <location>
        <begin position="230"/>
        <end position="250"/>
    </location>
</feature>
<feature type="transmembrane region" description="Helical" evidence="3">
    <location>
        <begin position="263"/>
        <end position="283"/>
    </location>
</feature>
<feature type="sequence conflict" description="In Ref. 2; AAI24272." evidence="6" ref="2">
    <original>T</original>
    <variation>A</variation>
    <location>
        <position position="115"/>
    </location>
</feature>
<gene>
    <name evidence="5" type="primary">sfxn4</name>
</gene>
<proteinExistence type="evidence at transcript level"/>
<comment type="function">
    <text evidence="1 2">Mitochondrial amino-acid transporter (By similarity). Does not act as a serine transporter: not able to mediate transport of serine into mitochondria (By similarity).</text>
</comment>
<comment type="subcellular location">
    <subcellularLocation>
        <location evidence="4">Mitochondrion inner membrane</location>
        <topology evidence="3">Multi-pass membrane protein</topology>
    </subcellularLocation>
</comment>
<comment type="disruption phenotype">
    <text evidence="4">Morpholino knockdown of the protein causes erythroid abnormality and global defects in respiratory-chain activity. Morphant embryos exhibit erythrocytes with enlarged nuclei containing open chromatin, consistent with maturation arrest. The nuclear/cytoplasmic ratio is increased nearly 3-fold. Anemia cannot be rescued neither by exogenous folate or vitamin B12 supplementation, nor by N-acetylcysteine treatment.</text>
</comment>
<comment type="similarity">
    <text evidence="6">Belongs to the sideroflexin family.</text>
</comment>
<accession>A8E7G5</accession>
<accession>Q08CE5</accession>
<dbReference type="EMBL" id="BX248127">
    <property type="status" value="NOT_ANNOTATED_CDS"/>
    <property type="molecule type" value="Genomic_DNA"/>
</dbReference>
<dbReference type="EMBL" id="BC124271">
    <property type="protein sequence ID" value="AAI24272.1"/>
    <property type="molecule type" value="mRNA"/>
</dbReference>
<dbReference type="RefSeq" id="NP_001070130.1">
    <property type="nucleotide sequence ID" value="NM_001076662.1"/>
</dbReference>
<dbReference type="FunCoup" id="A8E7G5">
    <property type="interactions" value="579"/>
</dbReference>
<dbReference type="STRING" id="7955.ENSDARP00000092724"/>
<dbReference type="PaxDb" id="7955-ENSDARP00000092724"/>
<dbReference type="PeptideAtlas" id="A8E7G5"/>
<dbReference type="Ensembl" id="ENSDART00000101949">
    <property type="protein sequence ID" value="ENSDARP00000092724"/>
    <property type="gene ID" value="ENSDARG00000069832"/>
</dbReference>
<dbReference type="GeneID" id="556121"/>
<dbReference type="KEGG" id="dre:556121"/>
<dbReference type="AGR" id="ZFIN:ZDB-GENE-050309-187"/>
<dbReference type="CTD" id="119559"/>
<dbReference type="ZFIN" id="ZDB-GENE-050309-187">
    <property type="gene designation" value="sfxn4"/>
</dbReference>
<dbReference type="eggNOG" id="KOG3767">
    <property type="taxonomic scope" value="Eukaryota"/>
</dbReference>
<dbReference type="HOGENOM" id="CLU_039425_3_1_1"/>
<dbReference type="InParanoid" id="A8E7G5"/>
<dbReference type="OMA" id="NVRFWIA"/>
<dbReference type="OrthoDB" id="6608471at2759"/>
<dbReference type="PhylomeDB" id="A8E7G5"/>
<dbReference type="TreeFam" id="TF313205"/>
<dbReference type="PRO" id="PR:A8E7G5"/>
<dbReference type="Proteomes" id="UP000000437">
    <property type="component" value="Alternate scaffold 13"/>
</dbReference>
<dbReference type="Proteomes" id="UP000000437">
    <property type="component" value="Chromosome 13"/>
</dbReference>
<dbReference type="Bgee" id="ENSDARG00000069832">
    <property type="expression patterns" value="Expressed in heart and 23 other cell types or tissues"/>
</dbReference>
<dbReference type="GO" id="GO:0005743">
    <property type="term" value="C:mitochondrial inner membrane"/>
    <property type="evidence" value="ECO:0000318"/>
    <property type="project" value="GO_Central"/>
</dbReference>
<dbReference type="GO" id="GO:0005739">
    <property type="term" value="C:mitochondrion"/>
    <property type="evidence" value="ECO:0000314"/>
    <property type="project" value="ZFIN"/>
</dbReference>
<dbReference type="GO" id="GO:0015075">
    <property type="term" value="F:monoatomic ion transmembrane transporter activity"/>
    <property type="evidence" value="ECO:0007669"/>
    <property type="project" value="InterPro"/>
</dbReference>
<dbReference type="GO" id="GO:0022857">
    <property type="term" value="F:transmembrane transporter activity"/>
    <property type="evidence" value="ECO:0000318"/>
    <property type="project" value="GO_Central"/>
</dbReference>
<dbReference type="GO" id="GO:0006865">
    <property type="term" value="P:amino acid transport"/>
    <property type="evidence" value="ECO:0007669"/>
    <property type="project" value="UniProtKB-KW"/>
</dbReference>
<dbReference type="GO" id="GO:0045333">
    <property type="term" value="P:cellular respiration"/>
    <property type="evidence" value="ECO:0000315"/>
    <property type="project" value="ZFIN"/>
</dbReference>
<dbReference type="GO" id="GO:0030218">
    <property type="term" value="P:erythrocyte differentiation"/>
    <property type="evidence" value="ECO:0000315"/>
    <property type="project" value="ZFIN"/>
</dbReference>
<dbReference type="GO" id="GO:1990542">
    <property type="term" value="P:mitochondrial transmembrane transport"/>
    <property type="evidence" value="ECO:0000318"/>
    <property type="project" value="GO_Central"/>
</dbReference>
<dbReference type="InterPro" id="IPR004686">
    <property type="entry name" value="Mtc"/>
</dbReference>
<dbReference type="PANTHER" id="PTHR11153">
    <property type="entry name" value="SIDEROFLEXIN"/>
    <property type="match status" value="1"/>
</dbReference>
<dbReference type="PANTHER" id="PTHR11153:SF3">
    <property type="entry name" value="SIDEROFLEXIN-4"/>
    <property type="match status" value="1"/>
</dbReference>
<dbReference type="Pfam" id="PF03820">
    <property type="entry name" value="SFXNs"/>
    <property type="match status" value="1"/>
</dbReference>
<sequence>MDPNLQYWQNNGQSFLSRLGLWSKILDPTLLLSQAEIEEARTLIQNEENTPGKNDKVSNAWLLSLSSVHSDTGAVISPAYRPQVFLPISAPLVVGSLIAHKGIKSAMFWQFVLHTYCAGFNHANRNATATKDNKTTMKQSLLILGAVSYSTVTGALPQIILQRLRLISSLTQTICRSFLPVPLAAGLAAFNILVVRSEEAENGISLFDANGNAVGVSKEAGFKAVKETAISRATLFGTTAALPTFLMALLERAKFVQRNPRLIAPIGSMCTVITFGLMIPVSFSLFPQLGKIKKENLEKEFQSLDGNEELFYHRGL</sequence>
<name>SFXN4_DANRE</name>
<keyword id="KW-0029">Amino-acid transport</keyword>
<keyword id="KW-0472">Membrane</keyword>
<keyword id="KW-0496">Mitochondrion</keyword>
<keyword id="KW-0999">Mitochondrion inner membrane</keyword>
<keyword id="KW-1185">Reference proteome</keyword>
<keyword id="KW-0812">Transmembrane</keyword>
<keyword id="KW-1133">Transmembrane helix</keyword>
<keyword id="KW-0813">Transport</keyword>
<protein>
    <recommendedName>
        <fullName evidence="5">Sideroflexin-4</fullName>
    </recommendedName>
</protein>
<organism>
    <name type="scientific">Danio rerio</name>
    <name type="common">Zebrafish</name>
    <name type="synonym">Brachydanio rerio</name>
    <dbReference type="NCBI Taxonomy" id="7955"/>
    <lineage>
        <taxon>Eukaryota</taxon>
        <taxon>Metazoa</taxon>
        <taxon>Chordata</taxon>
        <taxon>Craniata</taxon>
        <taxon>Vertebrata</taxon>
        <taxon>Euteleostomi</taxon>
        <taxon>Actinopterygii</taxon>
        <taxon>Neopterygii</taxon>
        <taxon>Teleostei</taxon>
        <taxon>Ostariophysi</taxon>
        <taxon>Cypriniformes</taxon>
        <taxon>Danionidae</taxon>
        <taxon>Danioninae</taxon>
        <taxon>Danio</taxon>
    </lineage>
</organism>
<reference key="1">
    <citation type="journal article" date="2013" name="Nature">
        <title>The zebrafish reference genome sequence and its relationship to the human genome.</title>
        <authorList>
            <person name="Howe K."/>
            <person name="Clark M.D."/>
            <person name="Torroja C.F."/>
            <person name="Torrance J."/>
            <person name="Berthelot C."/>
            <person name="Muffato M."/>
            <person name="Collins J.E."/>
            <person name="Humphray S."/>
            <person name="McLaren K."/>
            <person name="Matthews L."/>
            <person name="McLaren S."/>
            <person name="Sealy I."/>
            <person name="Caccamo M."/>
            <person name="Churcher C."/>
            <person name="Scott C."/>
            <person name="Barrett J.C."/>
            <person name="Koch R."/>
            <person name="Rauch G.J."/>
            <person name="White S."/>
            <person name="Chow W."/>
            <person name="Kilian B."/>
            <person name="Quintais L.T."/>
            <person name="Guerra-Assuncao J.A."/>
            <person name="Zhou Y."/>
            <person name="Gu Y."/>
            <person name="Yen J."/>
            <person name="Vogel J.H."/>
            <person name="Eyre T."/>
            <person name="Redmond S."/>
            <person name="Banerjee R."/>
            <person name="Chi J."/>
            <person name="Fu B."/>
            <person name="Langley E."/>
            <person name="Maguire S.F."/>
            <person name="Laird G.K."/>
            <person name="Lloyd D."/>
            <person name="Kenyon E."/>
            <person name="Donaldson S."/>
            <person name="Sehra H."/>
            <person name="Almeida-King J."/>
            <person name="Loveland J."/>
            <person name="Trevanion S."/>
            <person name="Jones M."/>
            <person name="Quail M."/>
            <person name="Willey D."/>
            <person name="Hunt A."/>
            <person name="Burton J."/>
            <person name="Sims S."/>
            <person name="McLay K."/>
            <person name="Plumb B."/>
            <person name="Davis J."/>
            <person name="Clee C."/>
            <person name="Oliver K."/>
            <person name="Clark R."/>
            <person name="Riddle C."/>
            <person name="Elliot D."/>
            <person name="Threadgold G."/>
            <person name="Harden G."/>
            <person name="Ware D."/>
            <person name="Begum S."/>
            <person name="Mortimore B."/>
            <person name="Kerry G."/>
            <person name="Heath P."/>
            <person name="Phillimore B."/>
            <person name="Tracey A."/>
            <person name="Corby N."/>
            <person name="Dunn M."/>
            <person name="Johnson C."/>
            <person name="Wood J."/>
            <person name="Clark S."/>
            <person name="Pelan S."/>
            <person name="Griffiths G."/>
            <person name="Smith M."/>
            <person name="Glithero R."/>
            <person name="Howden P."/>
            <person name="Barker N."/>
            <person name="Lloyd C."/>
            <person name="Stevens C."/>
            <person name="Harley J."/>
            <person name="Holt K."/>
            <person name="Panagiotidis G."/>
            <person name="Lovell J."/>
            <person name="Beasley H."/>
            <person name="Henderson C."/>
            <person name="Gordon D."/>
            <person name="Auger K."/>
            <person name="Wright D."/>
            <person name="Collins J."/>
            <person name="Raisen C."/>
            <person name="Dyer L."/>
            <person name="Leung K."/>
            <person name="Robertson L."/>
            <person name="Ambridge K."/>
            <person name="Leongamornlert D."/>
            <person name="McGuire S."/>
            <person name="Gilderthorp R."/>
            <person name="Griffiths C."/>
            <person name="Manthravadi D."/>
            <person name="Nichol S."/>
            <person name="Barker G."/>
            <person name="Whitehead S."/>
            <person name="Kay M."/>
            <person name="Brown J."/>
            <person name="Murnane C."/>
            <person name="Gray E."/>
            <person name="Humphries M."/>
            <person name="Sycamore N."/>
            <person name="Barker D."/>
            <person name="Saunders D."/>
            <person name="Wallis J."/>
            <person name="Babbage A."/>
            <person name="Hammond S."/>
            <person name="Mashreghi-Mohammadi M."/>
            <person name="Barr L."/>
            <person name="Martin S."/>
            <person name="Wray P."/>
            <person name="Ellington A."/>
            <person name="Matthews N."/>
            <person name="Ellwood M."/>
            <person name="Woodmansey R."/>
            <person name="Clark G."/>
            <person name="Cooper J."/>
            <person name="Tromans A."/>
            <person name="Grafham D."/>
            <person name="Skuce C."/>
            <person name="Pandian R."/>
            <person name="Andrews R."/>
            <person name="Harrison E."/>
            <person name="Kimberley A."/>
            <person name="Garnett J."/>
            <person name="Fosker N."/>
            <person name="Hall R."/>
            <person name="Garner P."/>
            <person name="Kelly D."/>
            <person name="Bird C."/>
            <person name="Palmer S."/>
            <person name="Gehring I."/>
            <person name="Berger A."/>
            <person name="Dooley C.M."/>
            <person name="Ersan-Urun Z."/>
            <person name="Eser C."/>
            <person name="Geiger H."/>
            <person name="Geisler M."/>
            <person name="Karotki L."/>
            <person name="Kirn A."/>
            <person name="Konantz J."/>
            <person name="Konantz M."/>
            <person name="Oberlander M."/>
            <person name="Rudolph-Geiger S."/>
            <person name="Teucke M."/>
            <person name="Lanz C."/>
            <person name="Raddatz G."/>
            <person name="Osoegawa K."/>
            <person name="Zhu B."/>
            <person name="Rapp A."/>
            <person name="Widaa S."/>
            <person name="Langford C."/>
            <person name="Yang F."/>
            <person name="Schuster S.C."/>
            <person name="Carter N.P."/>
            <person name="Harrow J."/>
            <person name="Ning Z."/>
            <person name="Herrero J."/>
            <person name="Searle S.M."/>
            <person name="Enright A."/>
            <person name="Geisler R."/>
            <person name="Plasterk R.H."/>
            <person name="Lee C."/>
            <person name="Westerfield M."/>
            <person name="de Jong P.J."/>
            <person name="Zon L.I."/>
            <person name="Postlethwait J.H."/>
            <person name="Nusslein-Volhard C."/>
            <person name="Hubbard T.J."/>
            <person name="Roest Crollius H."/>
            <person name="Rogers J."/>
            <person name="Stemple D.L."/>
        </authorList>
    </citation>
    <scope>NUCLEOTIDE SEQUENCE [LARGE SCALE GENOMIC DNA]</scope>
    <source>
        <strain>Tuebingen</strain>
    </source>
</reference>
<reference key="2">
    <citation type="submission" date="2006-09" db="EMBL/GenBank/DDBJ databases">
        <authorList>
            <consortium name="NIH - Zebrafish Gene Collection (ZGC) project"/>
        </authorList>
    </citation>
    <scope>NUCLEOTIDE SEQUENCE [LARGE SCALE MRNA]</scope>
    <source>
        <tissue>Larva</tissue>
    </source>
</reference>
<reference key="3">
    <citation type="journal article" date="2013" name="Am. J. Hum. Genet.">
        <title>Macrocytic anemia and mitochondriopathy resulting from a defect in sideroflexin 4.</title>
        <authorList>
            <person name="Hildick-Smith G.J."/>
            <person name="Cooney J.D."/>
            <person name="Garone C."/>
            <person name="Kremer L.S."/>
            <person name="Haack T.B."/>
            <person name="Thon J.N."/>
            <person name="Miyata N."/>
            <person name="Lieber D.S."/>
            <person name="Calvo S.E."/>
            <person name="Akman H.O."/>
            <person name="Yien Y.Y."/>
            <person name="Huston N.C."/>
            <person name="Branco D.S."/>
            <person name="Shah D.I."/>
            <person name="Freedman M.L."/>
            <person name="Koehler C.M."/>
            <person name="Italiano J.E. Jr."/>
            <person name="Merkenschlager A."/>
            <person name="Beblo S."/>
            <person name="Strom T.M."/>
            <person name="Meitinger T."/>
            <person name="Freisinger P."/>
            <person name="Donati M.A."/>
            <person name="Prokisch H."/>
            <person name="Mootha V.K."/>
            <person name="DiMauro S."/>
            <person name="Paw B.H."/>
        </authorList>
    </citation>
    <scope>SUBCELLULAR LOCATION</scope>
    <scope>DISRUPTION PHENOTYPE</scope>
</reference>